<accession>Q896F1</accession>
<proteinExistence type="inferred from homology"/>
<dbReference type="EC" id="3.1.-.-" evidence="1"/>
<dbReference type="EMBL" id="AE015927">
    <property type="protein sequence ID" value="AAO35639.1"/>
    <property type="molecule type" value="Genomic_DNA"/>
</dbReference>
<dbReference type="SMR" id="Q896F1"/>
<dbReference type="STRING" id="212717.CTC_01056"/>
<dbReference type="GeneID" id="24255162"/>
<dbReference type="KEGG" id="ctc:CTC_01056"/>
<dbReference type="HOGENOM" id="CLU_098240_2_0_9"/>
<dbReference type="OrthoDB" id="9796140at2"/>
<dbReference type="Proteomes" id="UP000001412">
    <property type="component" value="Chromosome"/>
</dbReference>
<dbReference type="GO" id="GO:0005829">
    <property type="term" value="C:cytosol"/>
    <property type="evidence" value="ECO:0007669"/>
    <property type="project" value="TreeGrafter"/>
</dbReference>
<dbReference type="GO" id="GO:0004518">
    <property type="term" value="F:nuclease activity"/>
    <property type="evidence" value="ECO:0007669"/>
    <property type="project" value="UniProtKB-KW"/>
</dbReference>
<dbReference type="GO" id="GO:0000967">
    <property type="term" value="P:rRNA 5'-end processing"/>
    <property type="evidence" value="ECO:0007669"/>
    <property type="project" value="UniProtKB-UniRule"/>
</dbReference>
<dbReference type="CDD" id="cd16964">
    <property type="entry name" value="YqgF"/>
    <property type="match status" value="1"/>
</dbReference>
<dbReference type="Gene3D" id="3.30.420.140">
    <property type="entry name" value="YqgF/RNase H-like domain"/>
    <property type="match status" value="1"/>
</dbReference>
<dbReference type="HAMAP" id="MF_00651">
    <property type="entry name" value="Nuclease_YqgF"/>
    <property type="match status" value="1"/>
</dbReference>
<dbReference type="InterPro" id="IPR012337">
    <property type="entry name" value="RNaseH-like_sf"/>
</dbReference>
<dbReference type="InterPro" id="IPR005227">
    <property type="entry name" value="YqgF"/>
</dbReference>
<dbReference type="InterPro" id="IPR006641">
    <property type="entry name" value="YqgF/RNaseH-like_dom"/>
</dbReference>
<dbReference type="InterPro" id="IPR037027">
    <property type="entry name" value="YqgF/RNaseH-like_dom_sf"/>
</dbReference>
<dbReference type="NCBIfam" id="TIGR00250">
    <property type="entry name" value="RNAse_H_YqgF"/>
    <property type="match status" value="1"/>
</dbReference>
<dbReference type="PANTHER" id="PTHR33317">
    <property type="entry name" value="POLYNUCLEOTIDYL TRANSFERASE, RIBONUCLEASE H-LIKE SUPERFAMILY PROTEIN"/>
    <property type="match status" value="1"/>
</dbReference>
<dbReference type="PANTHER" id="PTHR33317:SF4">
    <property type="entry name" value="POLYNUCLEOTIDYL TRANSFERASE, RIBONUCLEASE H-LIKE SUPERFAMILY PROTEIN"/>
    <property type="match status" value="1"/>
</dbReference>
<dbReference type="Pfam" id="PF03652">
    <property type="entry name" value="RuvX"/>
    <property type="match status" value="1"/>
</dbReference>
<dbReference type="SMART" id="SM00732">
    <property type="entry name" value="YqgFc"/>
    <property type="match status" value="1"/>
</dbReference>
<dbReference type="SUPFAM" id="SSF53098">
    <property type="entry name" value="Ribonuclease H-like"/>
    <property type="match status" value="1"/>
</dbReference>
<keyword id="KW-0963">Cytoplasm</keyword>
<keyword id="KW-0378">Hydrolase</keyword>
<keyword id="KW-0540">Nuclease</keyword>
<keyword id="KW-1185">Reference proteome</keyword>
<keyword id="KW-0690">Ribosome biogenesis</keyword>
<reference key="1">
    <citation type="journal article" date="2003" name="Proc. Natl. Acad. Sci. U.S.A.">
        <title>The genome sequence of Clostridium tetani, the causative agent of tetanus disease.</title>
        <authorList>
            <person name="Brueggemann H."/>
            <person name="Baeumer S."/>
            <person name="Fricke W.F."/>
            <person name="Wiezer A."/>
            <person name="Liesegang H."/>
            <person name="Decker I."/>
            <person name="Herzberg C."/>
            <person name="Martinez-Arias R."/>
            <person name="Merkl R."/>
            <person name="Henne A."/>
            <person name="Gottschalk G."/>
        </authorList>
    </citation>
    <scope>NUCLEOTIDE SEQUENCE [LARGE SCALE GENOMIC DNA]</scope>
    <source>
        <strain>Massachusetts / E88</strain>
    </source>
</reference>
<gene>
    <name type="ordered locus">CTC_01056</name>
</gene>
<evidence type="ECO:0000255" key="1">
    <source>
        <dbReference type="HAMAP-Rule" id="MF_00651"/>
    </source>
</evidence>
<organism>
    <name type="scientific">Clostridium tetani (strain Massachusetts / E88)</name>
    <dbReference type="NCBI Taxonomy" id="212717"/>
    <lineage>
        <taxon>Bacteria</taxon>
        <taxon>Bacillati</taxon>
        <taxon>Bacillota</taxon>
        <taxon>Clostridia</taxon>
        <taxon>Eubacteriales</taxon>
        <taxon>Clostridiaceae</taxon>
        <taxon>Clostridium</taxon>
    </lineage>
</organism>
<protein>
    <recommendedName>
        <fullName evidence="1">Putative pre-16S rRNA nuclease</fullName>
        <ecNumber evidence="1">3.1.-.-</ecNumber>
    </recommendedName>
</protein>
<name>YQGF_CLOTE</name>
<sequence>MRILGLDVGDRTIGVAISDPLGWTAQGVKTIKRSNLKNDIKEIEDICNEYKVDKIVSGLPKNMNGTLGPQSEKVTEFCDILKKELEKEIIMWDERLTTVAAHKAMIEGDLSRAKRKKIVDKIAAIYILQGYLDSVYNK</sequence>
<feature type="chain" id="PRO_0000172051" description="Putative pre-16S rRNA nuclease">
    <location>
        <begin position="1"/>
        <end position="138"/>
    </location>
</feature>
<comment type="function">
    <text evidence="1">Could be a nuclease involved in processing of the 5'-end of pre-16S rRNA.</text>
</comment>
<comment type="subcellular location">
    <subcellularLocation>
        <location evidence="1">Cytoplasm</location>
    </subcellularLocation>
</comment>
<comment type="similarity">
    <text evidence="1">Belongs to the YqgF nuclease family.</text>
</comment>